<keyword id="KW-0027">Amidation</keyword>
<keyword id="KW-0165">Cleavage on pair of basic residues</keyword>
<keyword id="KW-0903">Direct protein sequencing</keyword>
<keyword id="KW-0527">Neuropeptide</keyword>
<keyword id="KW-0964">Secreted</keyword>
<protein>
    <recommendedName>
        <fullName evidence="6">Short neuropeptide F</fullName>
        <shortName evidence="6">sNPF</shortName>
    </recommendedName>
    <component>
        <recommendedName>
            <fullName evidence="6">sNPF peptide 1</fullName>
            <shortName evidence="4">sNPF-1</shortName>
        </recommendedName>
    </component>
    <component>
        <recommendedName>
            <fullName evidence="6">sNPF peptide 2</fullName>
            <shortName evidence="4">sNPF-2</shortName>
        </recommendedName>
    </component>
    <component>
        <recommendedName>
            <fullName evidence="6">sNPF peptide 3</fullName>
            <shortName evidence="4">sNPF-3</shortName>
        </recommendedName>
    </component>
</protein>
<feature type="propeptide" id="PRO_0000444276" evidence="5">
    <location>
        <begin position="1"/>
        <end position="23"/>
    </location>
</feature>
<feature type="peptide" id="PRO_0000444277" description="sNPF peptide 1" evidence="3">
    <location>
        <begin position="26"/>
        <end position="36"/>
    </location>
</feature>
<feature type="propeptide" id="PRO_0000444278" evidence="5">
    <location>
        <begin position="40"/>
        <end position="62"/>
    </location>
</feature>
<feature type="peptide" id="PRO_0000444279" description="sNPF peptide 2" evidence="3">
    <location>
        <begin position="64"/>
        <end position="70"/>
    </location>
</feature>
<feature type="propeptide" id="PRO_0000444280" evidence="5">
    <location>
        <begin position="74"/>
        <end position="96"/>
    </location>
</feature>
<feature type="peptide" id="PRO_0000444281" description="sNPF peptide 3" evidence="3">
    <location>
        <begin position="98"/>
        <end position="105"/>
    </location>
</feature>
<feature type="propeptide" id="PRO_0000444282" evidence="5">
    <location>
        <begin position="109"/>
        <end position="139"/>
    </location>
</feature>
<feature type="region of interest" description="Disordered" evidence="2">
    <location>
        <begin position="1"/>
        <end position="48"/>
    </location>
</feature>
<feature type="compositionally biased region" description="Basic residues" evidence="2">
    <location>
        <begin position="22"/>
        <end position="37"/>
    </location>
</feature>
<feature type="modified residue" description="Phenylalanine amide" evidence="3">
    <location>
        <position position="36"/>
    </location>
</feature>
<feature type="modified residue" description="Phenylalanine amide" evidence="3">
    <location>
        <position position="70"/>
    </location>
</feature>
<feature type="modified residue" description="Phenylalanine amide" evidence="3">
    <location>
        <position position="105"/>
    </location>
</feature>
<accession>C0HKV9</accession>
<accession>C0HKW0</accession>
<accession>C0HKW1</accession>
<sequence length="139" mass="16066">MGRARRTVRAPAQHDALGGHALARKSVRSPSRRLRFGRRSDPDMPPQAPLDEMNELLSLREVRTPVRLRFGRRSEERAVPHIFPQEFLTQEQDRAVRAPSIRLRFGRRSDNNMFLLPYESALPQEVKANGSVEDDRQQE</sequence>
<organism>
    <name type="scientific">Agrotis ipsilon</name>
    <name type="common">Black cutworm moth</name>
    <dbReference type="NCBI Taxonomy" id="56364"/>
    <lineage>
        <taxon>Eukaryota</taxon>
        <taxon>Metazoa</taxon>
        <taxon>Ecdysozoa</taxon>
        <taxon>Arthropoda</taxon>
        <taxon>Hexapoda</taxon>
        <taxon>Insecta</taxon>
        <taxon>Pterygota</taxon>
        <taxon>Neoptera</taxon>
        <taxon>Endopterygota</taxon>
        <taxon>Lepidoptera</taxon>
        <taxon>Glossata</taxon>
        <taxon>Ditrysia</taxon>
        <taxon>Noctuoidea</taxon>
        <taxon>Noctuidae</taxon>
        <taxon>Noctuinae</taxon>
        <taxon>Noctuini</taxon>
        <taxon>Agrotis</taxon>
    </lineage>
</organism>
<reference evidence="5" key="1">
    <citation type="journal article" date="2018" name="J. Proteome Res.">
        <title>Mating-induced differential peptidomics of neuropeptides and protein hormones in Agrotis ipsilon moths.</title>
        <authorList>
            <person name="Diesner M."/>
            <person name="Gallot A."/>
            <person name="Binz H."/>
            <person name="Gaertner C."/>
            <person name="Vitecek S."/>
            <person name="Kahnt J."/>
            <person name="Schachtner J."/>
            <person name="Jacquin-Joly E."/>
            <person name="Gadenne C."/>
        </authorList>
    </citation>
    <scope>NUCLEOTIDE SEQUENCE [MRNA]</scope>
    <scope>PROTEIN SEQUENCE OF 26-36; 64-70 AND 98-105</scope>
    <scope>TISSUE SPECIFICITY</scope>
    <scope>MASS SPECTROMETRY</scope>
    <scope>IDENTIFICATION BY MASS SPECTROMETRY</scope>
    <scope>AMIDATION AT PHE-36; PHE-70 AND PHE-105</scope>
</reference>
<name>SNPF_AGRIP</name>
<comment type="function">
    <text evidence="1">Plays a role in controlling food intake and regulating body size.</text>
</comment>
<comment type="subcellular location">
    <subcellularLocation>
        <location evidence="5">Secreted</location>
    </subcellularLocation>
</comment>
<comment type="tissue specificity">
    <text evidence="3">sNPF peptide 1: Expressed in corpora cardiaca (CC), corpora allata (CA), antennal lobe (AL) and gnathal ganglion (GNG) (at protein level). Expression in AL detected in all animals, in GNG in most animals, expression in CC and CA in some animals (at protein level). sNPF peptide 2: Expressed in corpora cardiaca (CC), corpora allata (CA), antennal lobe (AL) and gnathal ganglion (GNG) (at protein level). Expression in AL detected in all animals, in GNG, CC and CA in most animals (at protein level). sNPF peptide 3: Expressed in corpora cardiaca (CC), corpora allata (CA), antennal lobe (AL) and gnathal ganglion (GNG) (at protein level). Expression detected in all animals (at protein level).</text>
</comment>
<comment type="mass spectrometry" mass="1359.81" method="MALDI" evidence="3">
    <molecule>sNPF peptide 1</molecule>
    <text>Short neuropeptide F 1.</text>
</comment>
<comment type="mass spectrometry" mass="887.54" method="MALDI" evidence="3">
    <molecule>sNPF peptide 2</molecule>
    <text>Short neuropeptide F 2.</text>
</comment>
<comment type="mass spectrometry" mass="958.58" method="MALDI" evidence="3">
    <molecule>sNPF peptide 3</molecule>
    <text>Short neuropeptide F 3.</text>
</comment>
<comment type="similarity">
    <text evidence="5">Belongs to the NPY family.</text>
</comment>
<evidence type="ECO:0000250" key="1">
    <source>
        <dbReference type="UniProtKB" id="Q9VIQ0"/>
    </source>
</evidence>
<evidence type="ECO:0000256" key="2">
    <source>
        <dbReference type="SAM" id="MobiDB-lite"/>
    </source>
</evidence>
<evidence type="ECO:0000269" key="3">
    <source>
    </source>
</evidence>
<evidence type="ECO:0000303" key="4">
    <source>
    </source>
</evidence>
<evidence type="ECO:0000305" key="5"/>
<evidence type="ECO:0000305" key="6">
    <source>
    </source>
</evidence>
<proteinExistence type="evidence at protein level"/>
<dbReference type="GO" id="GO:0005576">
    <property type="term" value="C:extracellular region"/>
    <property type="evidence" value="ECO:0007669"/>
    <property type="project" value="UniProtKB-SubCell"/>
</dbReference>
<dbReference type="GO" id="GO:0007218">
    <property type="term" value="P:neuropeptide signaling pathway"/>
    <property type="evidence" value="ECO:0007669"/>
    <property type="project" value="UniProtKB-KW"/>
</dbReference>